<name>MRAZ_RALN1</name>
<organism>
    <name type="scientific">Ralstonia nicotianae (strain ATCC BAA-1114 / GMI1000)</name>
    <name type="common">Ralstonia solanacearum</name>
    <dbReference type="NCBI Taxonomy" id="267608"/>
    <lineage>
        <taxon>Bacteria</taxon>
        <taxon>Pseudomonadati</taxon>
        <taxon>Pseudomonadota</taxon>
        <taxon>Betaproteobacteria</taxon>
        <taxon>Burkholderiales</taxon>
        <taxon>Burkholderiaceae</taxon>
        <taxon>Ralstonia</taxon>
        <taxon>Ralstonia solanacearum species complex</taxon>
    </lineage>
</organism>
<accession>Q8XVH8</accession>
<protein>
    <recommendedName>
        <fullName>Transcriptional regulator MraZ</fullName>
    </recommendedName>
</protein>
<gene>
    <name evidence="1" type="primary">mraZ</name>
    <name type="ordered locus">RSc2853</name>
    <name type="ORF">RS00252</name>
</gene>
<proteinExistence type="inferred from homology"/>
<comment type="subunit">
    <text evidence="1">Forms oligomers.</text>
</comment>
<comment type="subcellular location">
    <subcellularLocation>
        <location evidence="1">Cytoplasm</location>
        <location evidence="1">Nucleoid</location>
    </subcellularLocation>
</comment>
<comment type="similarity">
    <text evidence="1">Belongs to the MraZ family.</text>
</comment>
<feature type="chain" id="PRO_0000108524" description="Transcriptional regulator MraZ">
    <location>
        <begin position="1"/>
        <end position="142"/>
    </location>
</feature>
<feature type="domain" description="SpoVT-AbrB 1" evidence="2">
    <location>
        <begin position="5"/>
        <end position="51"/>
    </location>
</feature>
<feature type="domain" description="SpoVT-AbrB 2" evidence="2">
    <location>
        <begin position="77"/>
        <end position="120"/>
    </location>
</feature>
<reference key="1">
    <citation type="journal article" date="2002" name="Nature">
        <title>Genome sequence of the plant pathogen Ralstonia solanacearum.</title>
        <authorList>
            <person name="Salanoubat M."/>
            <person name="Genin S."/>
            <person name="Artiguenave F."/>
            <person name="Gouzy J."/>
            <person name="Mangenot S."/>
            <person name="Arlat M."/>
            <person name="Billault A."/>
            <person name="Brottier P."/>
            <person name="Camus J.-C."/>
            <person name="Cattolico L."/>
            <person name="Chandler M."/>
            <person name="Choisne N."/>
            <person name="Claudel-Renard C."/>
            <person name="Cunnac S."/>
            <person name="Demange N."/>
            <person name="Gaspin C."/>
            <person name="Lavie M."/>
            <person name="Moisan A."/>
            <person name="Robert C."/>
            <person name="Saurin W."/>
            <person name="Schiex T."/>
            <person name="Siguier P."/>
            <person name="Thebault P."/>
            <person name="Whalen M."/>
            <person name="Wincker P."/>
            <person name="Levy M."/>
            <person name="Weissenbach J."/>
            <person name="Boucher C.A."/>
        </authorList>
    </citation>
    <scope>NUCLEOTIDE SEQUENCE [LARGE SCALE GENOMIC DNA]</scope>
    <source>
        <strain>ATCC BAA-1114 / GMI1000</strain>
    </source>
</reference>
<keyword id="KW-0963">Cytoplasm</keyword>
<keyword id="KW-0238">DNA-binding</keyword>
<keyword id="KW-1185">Reference proteome</keyword>
<keyword id="KW-0677">Repeat</keyword>
<keyword id="KW-0804">Transcription</keyword>
<keyword id="KW-0805">Transcription regulation</keyword>
<evidence type="ECO:0000255" key="1">
    <source>
        <dbReference type="HAMAP-Rule" id="MF_01008"/>
    </source>
</evidence>
<evidence type="ECO:0000255" key="2">
    <source>
        <dbReference type="PROSITE-ProRule" id="PRU01076"/>
    </source>
</evidence>
<dbReference type="EMBL" id="AL646052">
    <property type="protein sequence ID" value="CAD16560.1"/>
    <property type="molecule type" value="Genomic_DNA"/>
</dbReference>
<dbReference type="RefSeq" id="WP_011002759.1">
    <property type="nucleotide sequence ID" value="NC_003295.1"/>
</dbReference>
<dbReference type="SMR" id="Q8XVH8"/>
<dbReference type="STRING" id="267608.RSc2853"/>
<dbReference type="EnsemblBacteria" id="CAD16560">
    <property type="protein sequence ID" value="CAD16560"/>
    <property type="gene ID" value="RSc2853"/>
</dbReference>
<dbReference type="GeneID" id="97320021"/>
<dbReference type="KEGG" id="rso:RSc2853"/>
<dbReference type="eggNOG" id="COG2001">
    <property type="taxonomic scope" value="Bacteria"/>
</dbReference>
<dbReference type="HOGENOM" id="CLU_107907_2_1_4"/>
<dbReference type="Proteomes" id="UP000001436">
    <property type="component" value="Chromosome"/>
</dbReference>
<dbReference type="GO" id="GO:0005737">
    <property type="term" value="C:cytoplasm"/>
    <property type="evidence" value="ECO:0007669"/>
    <property type="project" value="UniProtKB-UniRule"/>
</dbReference>
<dbReference type="GO" id="GO:0009295">
    <property type="term" value="C:nucleoid"/>
    <property type="evidence" value="ECO:0007669"/>
    <property type="project" value="UniProtKB-SubCell"/>
</dbReference>
<dbReference type="GO" id="GO:0003700">
    <property type="term" value="F:DNA-binding transcription factor activity"/>
    <property type="evidence" value="ECO:0007669"/>
    <property type="project" value="UniProtKB-UniRule"/>
</dbReference>
<dbReference type="GO" id="GO:0000976">
    <property type="term" value="F:transcription cis-regulatory region binding"/>
    <property type="evidence" value="ECO:0007669"/>
    <property type="project" value="TreeGrafter"/>
</dbReference>
<dbReference type="GO" id="GO:2000143">
    <property type="term" value="P:negative regulation of DNA-templated transcription initiation"/>
    <property type="evidence" value="ECO:0007669"/>
    <property type="project" value="TreeGrafter"/>
</dbReference>
<dbReference type="CDD" id="cd16321">
    <property type="entry name" value="MraZ_C"/>
    <property type="match status" value="1"/>
</dbReference>
<dbReference type="CDD" id="cd16320">
    <property type="entry name" value="MraZ_N"/>
    <property type="match status" value="1"/>
</dbReference>
<dbReference type="Gene3D" id="3.40.1550.20">
    <property type="entry name" value="Transcriptional regulator MraZ domain"/>
    <property type="match status" value="1"/>
</dbReference>
<dbReference type="HAMAP" id="MF_01008">
    <property type="entry name" value="MraZ"/>
    <property type="match status" value="1"/>
</dbReference>
<dbReference type="InterPro" id="IPR003444">
    <property type="entry name" value="MraZ"/>
</dbReference>
<dbReference type="InterPro" id="IPR035644">
    <property type="entry name" value="MraZ_C"/>
</dbReference>
<dbReference type="InterPro" id="IPR020603">
    <property type="entry name" value="MraZ_dom"/>
</dbReference>
<dbReference type="InterPro" id="IPR035642">
    <property type="entry name" value="MraZ_N"/>
</dbReference>
<dbReference type="InterPro" id="IPR038619">
    <property type="entry name" value="MraZ_sf"/>
</dbReference>
<dbReference type="InterPro" id="IPR007159">
    <property type="entry name" value="SpoVT-AbrB_dom"/>
</dbReference>
<dbReference type="InterPro" id="IPR037914">
    <property type="entry name" value="SpoVT-AbrB_sf"/>
</dbReference>
<dbReference type="NCBIfam" id="TIGR00242">
    <property type="entry name" value="division/cell wall cluster transcriptional repressor MraZ"/>
    <property type="match status" value="1"/>
</dbReference>
<dbReference type="PANTHER" id="PTHR34701">
    <property type="entry name" value="TRANSCRIPTIONAL REGULATOR MRAZ"/>
    <property type="match status" value="1"/>
</dbReference>
<dbReference type="PANTHER" id="PTHR34701:SF1">
    <property type="entry name" value="TRANSCRIPTIONAL REGULATOR MRAZ"/>
    <property type="match status" value="1"/>
</dbReference>
<dbReference type="Pfam" id="PF02381">
    <property type="entry name" value="MraZ"/>
    <property type="match status" value="2"/>
</dbReference>
<dbReference type="SUPFAM" id="SSF89447">
    <property type="entry name" value="AbrB/MazE/MraZ-like"/>
    <property type="match status" value="1"/>
</dbReference>
<dbReference type="PROSITE" id="PS51740">
    <property type="entry name" value="SPOVT_ABRB"/>
    <property type="match status" value="2"/>
</dbReference>
<sequence>MFQGASALTLDAKGRMSIPTRHREALQLQAEGRVTVTKHPDGCLMLFPRPEWERFRERIAALPMEAHWWKRIFLGSAADVELDTAGRVLITPELRLAATLERDVMLLGMGSHFEIWDAATYTAKEQAAMAQGMPDALKNFSF</sequence>